<gene>
    <name evidence="1" type="primary">ilvD</name>
    <name type="ordered locus">Glov_2505</name>
</gene>
<comment type="function">
    <text evidence="1">Functions in the biosynthesis of branched-chain amino acids. Catalyzes the dehydration of (2R,3R)-2,3-dihydroxy-3-methylpentanoate (2,3-dihydroxy-3-methylvalerate) into 2-oxo-3-methylpentanoate (2-oxo-3-methylvalerate) and of (2R)-2,3-dihydroxy-3-methylbutanoate (2,3-dihydroxyisovalerate) into 2-oxo-3-methylbutanoate (2-oxoisovalerate), the penultimate precursor to L-isoleucine and L-valine, respectively.</text>
</comment>
<comment type="catalytic activity">
    <reaction evidence="1">
        <text>(2R)-2,3-dihydroxy-3-methylbutanoate = 3-methyl-2-oxobutanoate + H2O</text>
        <dbReference type="Rhea" id="RHEA:24809"/>
        <dbReference type="ChEBI" id="CHEBI:11851"/>
        <dbReference type="ChEBI" id="CHEBI:15377"/>
        <dbReference type="ChEBI" id="CHEBI:49072"/>
        <dbReference type="EC" id="4.2.1.9"/>
    </reaction>
    <physiologicalReaction direction="left-to-right" evidence="1">
        <dbReference type="Rhea" id="RHEA:24810"/>
    </physiologicalReaction>
</comment>
<comment type="catalytic activity">
    <reaction evidence="1">
        <text>(2R,3R)-2,3-dihydroxy-3-methylpentanoate = (S)-3-methyl-2-oxopentanoate + H2O</text>
        <dbReference type="Rhea" id="RHEA:27694"/>
        <dbReference type="ChEBI" id="CHEBI:15377"/>
        <dbReference type="ChEBI" id="CHEBI:35146"/>
        <dbReference type="ChEBI" id="CHEBI:49258"/>
        <dbReference type="EC" id="4.2.1.9"/>
    </reaction>
    <physiologicalReaction direction="left-to-right" evidence="1">
        <dbReference type="Rhea" id="RHEA:27695"/>
    </physiologicalReaction>
</comment>
<comment type="cofactor">
    <cofactor evidence="1">
        <name>[2Fe-2S] cluster</name>
        <dbReference type="ChEBI" id="CHEBI:190135"/>
    </cofactor>
    <text evidence="1">Binds 1 [2Fe-2S] cluster per subunit. This cluster acts as a Lewis acid cofactor.</text>
</comment>
<comment type="cofactor">
    <cofactor evidence="1">
        <name>Mg(2+)</name>
        <dbReference type="ChEBI" id="CHEBI:18420"/>
    </cofactor>
</comment>
<comment type="pathway">
    <text evidence="1">Amino-acid biosynthesis; L-isoleucine biosynthesis; L-isoleucine from 2-oxobutanoate: step 3/4.</text>
</comment>
<comment type="pathway">
    <text evidence="1">Amino-acid biosynthesis; L-valine biosynthesis; L-valine from pyruvate: step 3/4.</text>
</comment>
<comment type="subunit">
    <text evidence="1">Homodimer.</text>
</comment>
<comment type="similarity">
    <text evidence="1">Belongs to the IlvD/Edd family.</text>
</comment>
<accession>B3E5X8</accession>
<protein>
    <recommendedName>
        <fullName evidence="1">Dihydroxy-acid dehydratase</fullName>
        <shortName evidence="1">DAD</shortName>
        <ecNumber evidence="1">4.2.1.9</ecNumber>
    </recommendedName>
</protein>
<reference key="1">
    <citation type="submission" date="2008-05" db="EMBL/GenBank/DDBJ databases">
        <title>Complete sequence of chromosome of Geobacter lovleyi SZ.</title>
        <authorList>
            <consortium name="US DOE Joint Genome Institute"/>
            <person name="Lucas S."/>
            <person name="Copeland A."/>
            <person name="Lapidus A."/>
            <person name="Glavina del Rio T."/>
            <person name="Dalin E."/>
            <person name="Tice H."/>
            <person name="Bruce D."/>
            <person name="Goodwin L."/>
            <person name="Pitluck S."/>
            <person name="Chertkov O."/>
            <person name="Meincke L."/>
            <person name="Brettin T."/>
            <person name="Detter J.C."/>
            <person name="Han C."/>
            <person name="Tapia R."/>
            <person name="Kuske C.R."/>
            <person name="Schmutz J."/>
            <person name="Larimer F."/>
            <person name="Land M."/>
            <person name="Hauser L."/>
            <person name="Kyrpides N."/>
            <person name="Mikhailova N."/>
            <person name="Sung Y."/>
            <person name="Fletcher K.E."/>
            <person name="Ritalahti K.M."/>
            <person name="Loeffler F.E."/>
            <person name="Richardson P."/>
        </authorList>
    </citation>
    <scope>NUCLEOTIDE SEQUENCE [LARGE SCALE GENOMIC DNA]</scope>
    <source>
        <strain>ATCC BAA-1151 / DSM 17278 / SZ</strain>
    </source>
</reference>
<sequence>MRSDMIKKGLERTPHRALLKATGIPQSQMERPFIGVATSFTDLIPGHVGMRDLERFIEKGIHSGGGYAQFFGIPGVCDGIAMGHKGMHYSLPTRELIADMVESVAEAHRLDGLVLLTNCDKITPGMLMAAARLNIPCIIVTAGPMMSGRGVEGRAYSFVTDTFEAMARYKAGVIDAKELQVCEDNACPGMGSCQGLFTANTMAILTETLGMSLPRCGTALAVSAMKRRIAFASGEKIVELVHNDVKPRDIMTRAAFENAIRVDLALGGSSNTVLHLLAIAREAGVDLPLETFDILAKETPQLASMNPAGKHFMEDLDIAGGVCGVLKQLGDKIIDTRTLFGLTTRQLAASIENVDQEVIRPLSAPVKKEGGIAVLFGSIAPKGAVVKQSGVSDKMMLFEGTARCFDSEELAMAALMEGVIKAGDVVVIRYEGPKGGPGMREMLAPTAALMGLGLGDSVALITDGRFSGGTRGPCIGHVSPEAAEGGPIALIQDGDRILLDIPNRKLDLLVDGATIEARRAQWTAPEPKIKTGWLARYAKVVTSAYTGAVTTAD</sequence>
<proteinExistence type="inferred from homology"/>
<evidence type="ECO:0000255" key="1">
    <source>
        <dbReference type="HAMAP-Rule" id="MF_00012"/>
    </source>
</evidence>
<keyword id="KW-0001">2Fe-2S</keyword>
<keyword id="KW-0028">Amino-acid biosynthesis</keyword>
<keyword id="KW-0100">Branched-chain amino acid biosynthesis</keyword>
<keyword id="KW-0408">Iron</keyword>
<keyword id="KW-0411">Iron-sulfur</keyword>
<keyword id="KW-0456">Lyase</keyword>
<keyword id="KW-0460">Magnesium</keyword>
<keyword id="KW-0479">Metal-binding</keyword>
<keyword id="KW-1185">Reference proteome</keyword>
<organism>
    <name type="scientific">Trichlorobacter lovleyi (strain ATCC BAA-1151 / DSM 17278 / SZ)</name>
    <name type="common">Geobacter lovleyi</name>
    <dbReference type="NCBI Taxonomy" id="398767"/>
    <lineage>
        <taxon>Bacteria</taxon>
        <taxon>Pseudomonadati</taxon>
        <taxon>Thermodesulfobacteriota</taxon>
        <taxon>Desulfuromonadia</taxon>
        <taxon>Geobacterales</taxon>
        <taxon>Geobacteraceae</taxon>
        <taxon>Trichlorobacter</taxon>
    </lineage>
</organism>
<feature type="chain" id="PRO_1000089389" description="Dihydroxy-acid dehydratase">
    <location>
        <begin position="1"/>
        <end position="553"/>
    </location>
</feature>
<feature type="active site" description="Proton acceptor" evidence="1">
    <location>
        <position position="467"/>
    </location>
</feature>
<feature type="binding site" evidence="1">
    <location>
        <position position="78"/>
    </location>
    <ligand>
        <name>Mg(2+)</name>
        <dbReference type="ChEBI" id="CHEBI:18420"/>
    </ligand>
</feature>
<feature type="binding site" evidence="1">
    <location>
        <position position="119"/>
    </location>
    <ligand>
        <name>[2Fe-2S] cluster</name>
        <dbReference type="ChEBI" id="CHEBI:190135"/>
    </ligand>
</feature>
<feature type="binding site" evidence="1">
    <location>
        <position position="120"/>
    </location>
    <ligand>
        <name>Mg(2+)</name>
        <dbReference type="ChEBI" id="CHEBI:18420"/>
    </ligand>
</feature>
<feature type="binding site" description="via carbamate group" evidence="1">
    <location>
        <position position="121"/>
    </location>
    <ligand>
        <name>Mg(2+)</name>
        <dbReference type="ChEBI" id="CHEBI:18420"/>
    </ligand>
</feature>
<feature type="binding site" evidence="1">
    <location>
        <position position="193"/>
    </location>
    <ligand>
        <name>[2Fe-2S] cluster</name>
        <dbReference type="ChEBI" id="CHEBI:190135"/>
    </ligand>
</feature>
<feature type="binding site" evidence="1">
    <location>
        <position position="441"/>
    </location>
    <ligand>
        <name>Mg(2+)</name>
        <dbReference type="ChEBI" id="CHEBI:18420"/>
    </ligand>
</feature>
<feature type="modified residue" description="N6-carboxylysine" evidence="1">
    <location>
        <position position="121"/>
    </location>
</feature>
<dbReference type="EC" id="4.2.1.9" evidence="1"/>
<dbReference type="EMBL" id="CP001089">
    <property type="protein sequence ID" value="ACD96219.1"/>
    <property type="molecule type" value="Genomic_DNA"/>
</dbReference>
<dbReference type="RefSeq" id="WP_012470552.1">
    <property type="nucleotide sequence ID" value="NC_010814.1"/>
</dbReference>
<dbReference type="SMR" id="B3E5X8"/>
<dbReference type="STRING" id="398767.Glov_2505"/>
<dbReference type="KEGG" id="glo:Glov_2505"/>
<dbReference type="eggNOG" id="COG0129">
    <property type="taxonomic scope" value="Bacteria"/>
</dbReference>
<dbReference type="HOGENOM" id="CLU_014271_4_2_7"/>
<dbReference type="OrthoDB" id="9807077at2"/>
<dbReference type="UniPathway" id="UPA00047">
    <property type="reaction ID" value="UER00057"/>
</dbReference>
<dbReference type="UniPathway" id="UPA00049">
    <property type="reaction ID" value="UER00061"/>
</dbReference>
<dbReference type="Proteomes" id="UP000002420">
    <property type="component" value="Chromosome"/>
</dbReference>
<dbReference type="GO" id="GO:0005829">
    <property type="term" value="C:cytosol"/>
    <property type="evidence" value="ECO:0007669"/>
    <property type="project" value="TreeGrafter"/>
</dbReference>
<dbReference type="GO" id="GO:0051537">
    <property type="term" value="F:2 iron, 2 sulfur cluster binding"/>
    <property type="evidence" value="ECO:0007669"/>
    <property type="project" value="UniProtKB-UniRule"/>
</dbReference>
<dbReference type="GO" id="GO:0004160">
    <property type="term" value="F:dihydroxy-acid dehydratase activity"/>
    <property type="evidence" value="ECO:0007669"/>
    <property type="project" value="UniProtKB-UniRule"/>
</dbReference>
<dbReference type="GO" id="GO:0000287">
    <property type="term" value="F:magnesium ion binding"/>
    <property type="evidence" value="ECO:0007669"/>
    <property type="project" value="UniProtKB-UniRule"/>
</dbReference>
<dbReference type="GO" id="GO:0009097">
    <property type="term" value="P:isoleucine biosynthetic process"/>
    <property type="evidence" value="ECO:0007669"/>
    <property type="project" value="UniProtKB-UniRule"/>
</dbReference>
<dbReference type="GO" id="GO:0009099">
    <property type="term" value="P:L-valine biosynthetic process"/>
    <property type="evidence" value="ECO:0007669"/>
    <property type="project" value="UniProtKB-UniRule"/>
</dbReference>
<dbReference type="FunFam" id="3.50.30.80:FF:000001">
    <property type="entry name" value="Dihydroxy-acid dehydratase"/>
    <property type="match status" value="1"/>
</dbReference>
<dbReference type="Gene3D" id="3.50.30.80">
    <property type="entry name" value="IlvD/EDD C-terminal domain-like"/>
    <property type="match status" value="1"/>
</dbReference>
<dbReference type="HAMAP" id="MF_00012">
    <property type="entry name" value="IlvD"/>
    <property type="match status" value="1"/>
</dbReference>
<dbReference type="InterPro" id="IPR042096">
    <property type="entry name" value="Dihydro-acid_dehy_C"/>
</dbReference>
<dbReference type="InterPro" id="IPR004404">
    <property type="entry name" value="DihydroxyA_deHydtase"/>
</dbReference>
<dbReference type="InterPro" id="IPR020558">
    <property type="entry name" value="DiOHA_6PGluconate_deHydtase_CS"/>
</dbReference>
<dbReference type="InterPro" id="IPR056740">
    <property type="entry name" value="ILV_EDD_C"/>
</dbReference>
<dbReference type="InterPro" id="IPR000581">
    <property type="entry name" value="ILV_EDD_N"/>
</dbReference>
<dbReference type="InterPro" id="IPR037237">
    <property type="entry name" value="IlvD/EDD_N"/>
</dbReference>
<dbReference type="NCBIfam" id="TIGR00110">
    <property type="entry name" value="ilvD"/>
    <property type="match status" value="1"/>
</dbReference>
<dbReference type="NCBIfam" id="NF002068">
    <property type="entry name" value="PRK00911.1"/>
    <property type="match status" value="1"/>
</dbReference>
<dbReference type="PANTHER" id="PTHR43661">
    <property type="entry name" value="D-XYLONATE DEHYDRATASE"/>
    <property type="match status" value="1"/>
</dbReference>
<dbReference type="PANTHER" id="PTHR43661:SF3">
    <property type="entry name" value="D-XYLONATE DEHYDRATASE YAGF-RELATED"/>
    <property type="match status" value="1"/>
</dbReference>
<dbReference type="Pfam" id="PF24877">
    <property type="entry name" value="ILV_EDD_C"/>
    <property type="match status" value="1"/>
</dbReference>
<dbReference type="Pfam" id="PF00920">
    <property type="entry name" value="ILVD_EDD_N"/>
    <property type="match status" value="1"/>
</dbReference>
<dbReference type="SUPFAM" id="SSF143975">
    <property type="entry name" value="IlvD/EDD N-terminal domain-like"/>
    <property type="match status" value="1"/>
</dbReference>
<dbReference type="SUPFAM" id="SSF52016">
    <property type="entry name" value="LeuD/IlvD-like"/>
    <property type="match status" value="1"/>
</dbReference>
<dbReference type="PROSITE" id="PS00886">
    <property type="entry name" value="ILVD_EDD_1"/>
    <property type="match status" value="1"/>
</dbReference>
<dbReference type="PROSITE" id="PS00887">
    <property type="entry name" value="ILVD_EDD_2"/>
    <property type="match status" value="1"/>
</dbReference>
<name>ILVD_TRIL1</name>